<name>RL30_LEGPL</name>
<evidence type="ECO:0000255" key="1">
    <source>
        <dbReference type="HAMAP-Rule" id="MF_01371"/>
    </source>
</evidence>
<evidence type="ECO:0000305" key="2"/>
<reference key="1">
    <citation type="journal article" date="2004" name="Nat. Genet.">
        <title>Evidence in the Legionella pneumophila genome for exploitation of host cell functions and high genome plasticity.</title>
        <authorList>
            <person name="Cazalet C."/>
            <person name="Rusniok C."/>
            <person name="Brueggemann H."/>
            <person name="Zidane N."/>
            <person name="Magnier A."/>
            <person name="Ma L."/>
            <person name="Tichit M."/>
            <person name="Jarraud S."/>
            <person name="Bouchier C."/>
            <person name="Vandenesch F."/>
            <person name="Kunst F."/>
            <person name="Etienne J."/>
            <person name="Glaser P."/>
            <person name="Buchrieser C."/>
        </authorList>
    </citation>
    <scope>NUCLEOTIDE SEQUENCE [LARGE SCALE GENOMIC DNA]</scope>
    <source>
        <strain>Lens</strain>
    </source>
</reference>
<protein>
    <recommendedName>
        <fullName evidence="1">Large ribosomal subunit protein uL30</fullName>
    </recommendedName>
    <alternativeName>
        <fullName evidence="2">50S ribosomal protein L30</fullName>
    </alternativeName>
</protein>
<proteinExistence type="inferred from homology"/>
<accession>Q5WZJ4</accession>
<comment type="subunit">
    <text evidence="1">Part of the 50S ribosomal subunit.</text>
</comment>
<comment type="similarity">
    <text evidence="1">Belongs to the universal ribosomal protein uL30 family.</text>
</comment>
<sequence>MGKKIKITLVKSTIGRKPKHVAIAKQLGLGKTNSSVVHSDTPAIRGLVNEINYLLLVEESA</sequence>
<dbReference type="EMBL" id="CR628337">
    <property type="protein sequence ID" value="CAH14618.1"/>
    <property type="molecule type" value="Genomic_DNA"/>
</dbReference>
<dbReference type="RefSeq" id="WP_010946096.1">
    <property type="nucleotide sequence ID" value="NC_006369.1"/>
</dbReference>
<dbReference type="SMR" id="Q5WZJ4"/>
<dbReference type="GeneID" id="57034350"/>
<dbReference type="KEGG" id="lpf:lpl0387"/>
<dbReference type="LegioList" id="lpl0387"/>
<dbReference type="HOGENOM" id="CLU_131047_1_4_6"/>
<dbReference type="Proteomes" id="UP000002517">
    <property type="component" value="Chromosome"/>
</dbReference>
<dbReference type="GO" id="GO:0022625">
    <property type="term" value="C:cytosolic large ribosomal subunit"/>
    <property type="evidence" value="ECO:0007669"/>
    <property type="project" value="TreeGrafter"/>
</dbReference>
<dbReference type="GO" id="GO:0003735">
    <property type="term" value="F:structural constituent of ribosome"/>
    <property type="evidence" value="ECO:0007669"/>
    <property type="project" value="InterPro"/>
</dbReference>
<dbReference type="GO" id="GO:0006412">
    <property type="term" value="P:translation"/>
    <property type="evidence" value="ECO:0007669"/>
    <property type="project" value="UniProtKB-UniRule"/>
</dbReference>
<dbReference type="CDD" id="cd01658">
    <property type="entry name" value="Ribosomal_L30"/>
    <property type="match status" value="1"/>
</dbReference>
<dbReference type="Gene3D" id="3.30.1390.20">
    <property type="entry name" value="Ribosomal protein L30, ferredoxin-like fold domain"/>
    <property type="match status" value="1"/>
</dbReference>
<dbReference type="HAMAP" id="MF_01371_B">
    <property type="entry name" value="Ribosomal_uL30_B"/>
    <property type="match status" value="1"/>
</dbReference>
<dbReference type="InterPro" id="IPR036919">
    <property type="entry name" value="Ribo_uL30_ferredoxin-like_sf"/>
</dbReference>
<dbReference type="InterPro" id="IPR005996">
    <property type="entry name" value="Ribosomal_uL30_bac-type"/>
</dbReference>
<dbReference type="InterPro" id="IPR016082">
    <property type="entry name" value="Ribosomal_uL30_ferredoxin-like"/>
</dbReference>
<dbReference type="NCBIfam" id="TIGR01308">
    <property type="entry name" value="rpmD_bact"/>
    <property type="match status" value="1"/>
</dbReference>
<dbReference type="PANTHER" id="PTHR15892:SF2">
    <property type="entry name" value="LARGE RIBOSOMAL SUBUNIT PROTEIN UL30M"/>
    <property type="match status" value="1"/>
</dbReference>
<dbReference type="PANTHER" id="PTHR15892">
    <property type="entry name" value="MITOCHONDRIAL RIBOSOMAL PROTEIN L30"/>
    <property type="match status" value="1"/>
</dbReference>
<dbReference type="Pfam" id="PF00327">
    <property type="entry name" value="Ribosomal_L30"/>
    <property type="match status" value="1"/>
</dbReference>
<dbReference type="PIRSF" id="PIRSF002211">
    <property type="entry name" value="Ribosomal_L30_bac-type"/>
    <property type="match status" value="1"/>
</dbReference>
<dbReference type="SUPFAM" id="SSF55129">
    <property type="entry name" value="Ribosomal protein L30p/L7e"/>
    <property type="match status" value="1"/>
</dbReference>
<feature type="chain" id="PRO_0000273802" description="Large ribosomal subunit protein uL30">
    <location>
        <begin position="1"/>
        <end position="61"/>
    </location>
</feature>
<organism>
    <name type="scientific">Legionella pneumophila (strain Lens)</name>
    <dbReference type="NCBI Taxonomy" id="297245"/>
    <lineage>
        <taxon>Bacteria</taxon>
        <taxon>Pseudomonadati</taxon>
        <taxon>Pseudomonadota</taxon>
        <taxon>Gammaproteobacteria</taxon>
        <taxon>Legionellales</taxon>
        <taxon>Legionellaceae</taxon>
        <taxon>Legionella</taxon>
    </lineage>
</organism>
<keyword id="KW-0687">Ribonucleoprotein</keyword>
<keyword id="KW-0689">Ribosomal protein</keyword>
<gene>
    <name evidence="1" type="primary">rpmD</name>
    <name type="ordered locus">lpl0387</name>
</gene>